<reference key="1">
    <citation type="journal article" date="2005" name="Science">
        <title>The transcriptional landscape of the mammalian genome.</title>
        <authorList>
            <person name="Carninci P."/>
            <person name="Kasukawa T."/>
            <person name="Katayama S."/>
            <person name="Gough J."/>
            <person name="Frith M.C."/>
            <person name="Maeda N."/>
            <person name="Oyama R."/>
            <person name="Ravasi T."/>
            <person name="Lenhard B."/>
            <person name="Wells C."/>
            <person name="Kodzius R."/>
            <person name="Shimokawa K."/>
            <person name="Bajic V.B."/>
            <person name="Brenner S.E."/>
            <person name="Batalov S."/>
            <person name="Forrest A.R."/>
            <person name="Zavolan M."/>
            <person name="Davis M.J."/>
            <person name="Wilming L.G."/>
            <person name="Aidinis V."/>
            <person name="Allen J.E."/>
            <person name="Ambesi-Impiombato A."/>
            <person name="Apweiler R."/>
            <person name="Aturaliya R.N."/>
            <person name="Bailey T.L."/>
            <person name="Bansal M."/>
            <person name="Baxter L."/>
            <person name="Beisel K.W."/>
            <person name="Bersano T."/>
            <person name="Bono H."/>
            <person name="Chalk A.M."/>
            <person name="Chiu K.P."/>
            <person name="Choudhary V."/>
            <person name="Christoffels A."/>
            <person name="Clutterbuck D.R."/>
            <person name="Crowe M.L."/>
            <person name="Dalla E."/>
            <person name="Dalrymple B.P."/>
            <person name="de Bono B."/>
            <person name="Della Gatta G."/>
            <person name="di Bernardo D."/>
            <person name="Down T."/>
            <person name="Engstrom P."/>
            <person name="Fagiolini M."/>
            <person name="Faulkner G."/>
            <person name="Fletcher C.F."/>
            <person name="Fukushima T."/>
            <person name="Furuno M."/>
            <person name="Futaki S."/>
            <person name="Gariboldi M."/>
            <person name="Georgii-Hemming P."/>
            <person name="Gingeras T.R."/>
            <person name="Gojobori T."/>
            <person name="Green R.E."/>
            <person name="Gustincich S."/>
            <person name="Harbers M."/>
            <person name="Hayashi Y."/>
            <person name="Hensch T.K."/>
            <person name="Hirokawa N."/>
            <person name="Hill D."/>
            <person name="Huminiecki L."/>
            <person name="Iacono M."/>
            <person name="Ikeo K."/>
            <person name="Iwama A."/>
            <person name="Ishikawa T."/>
            <person name="Jakt M."/>
            <person name="Kanapin A."/>
            <person name="Katoh M."/>
            <person name="Kawasawa Y."/>
            <person name="Kelso J."/>
            <person name="Kitamura H."/>
            <person name="Kitano H."/>
            <person name="Kollias G."/>
            <person name="Krishnan S.P."/>
            <person name="Kruger A."/>
            <person name="Kummerfeld S.K."/>
            <person name="Kurochkin I.V."/>
            <person name="Lareau L.F."/>
            <person name="Lazarevic D."/>
            <person name="Lipovich L."/>
            <person name="Liu J."/>
            <person name="Liuni S."/>
            <person name="McWilliam S."/>
            <person name="Madan Babu M."/>
            <person name="Madera M."/>
            <person name="Marchionni L."/>
            <person name="Matsuda H."/>
            <person name="Matsuzawa S."/>
            <person name="Miki H."/>
            <person name="Mignone F."/>
            <person name="Miyake S."/>
            <person name="Morris K."/>
            <person name="Mottagui-Tabar S."/>
            <person name="Mulder N."/>
            <person name="Nakano N."/>
            <person name="Nakauchi H."/>
            <person name="Ng P."/>
            <person name="Nilsson R."/>
            <person name="Nishiguchi S."/>
            <person name="Nishikawa S."/>
            <person name="Nori F."/>
            <person name="Ohara O."/>
            <person name="Okazaki Y."/>
            <person name="Orlando V."/>
            <person name="Pang K.C."/>
            <person name="Pavan W.J."/>
            <person name="Pavesi G."/>
            <person name="Pesole G."/>
            <person name="Petrovsky N."/>
            <person name="Piazza S."/>
            <person name="Reed J."/>
            <person name="Reid J.F."/>
            <person name="Ring B.Z."/>
            <person name="Ringwald M."/>
            <person name="Rost B."/>
            <person name="Ruan Y."/>
            <person name="Salzberg S.L."/>
            <person name="Sandelin A."/>
            <person name="Schneider C."/>
            <person name="Schoenbach C."/>
            <person name="Sekiguchi K."/>
            <person name="Semple C.A."/>
            <person name="Seno S."/>
            <person name="Sessa L."/>
            <person name="Sheng Y."/>
            <person name="Shibata Y."/>
            <person name="Shimada H."/>
            <person name="Shimada K."/>
            <person name="Silva D."/>
            <person name="Sinclair B."/>
            <person name="Sperling S."/>
            <person name="Stupka E."/>
            <person name="Sugiura K."/>
            <person name="Sultana R."/>
            <person name="Takenaka Y."/>
            <person name="Taki K."/>
            <person name="Tammoja K."/>
            <person name="Tan S.L."/>
            <person name="Tang S."/>
            <person name="Taylor M.S."/>
            <person name="Tegner J."/>
            <person name="Teichmann S.A."/>
            <person name="Ueda H.R."/>
            <person name="van Nimwegen E."/>
            <person name="Verardo R."/>
            <person name="Wei C.L."/>
            <person name="Yagi K."/>
            <person name="Yamanishi H."/>
            <person name="Zabarovsky E."/>
            <person name="Zhu S."/>
            <person name="Zimmer A."/>
            <person name="Hide W."/>
            <person name="Bult C."/>
            <person name="Grimmond S.M."/>
            <person name="Teasdale R.D."/>
            <person name="Liu E.T."/>
            <person name="Brusic V."/>
            <person name="Quackenbush J."/>
            <person name="Wahlestedt C."/>
            <person name="Mattick J.S."/>
            <person name="Hume D.A."/>
            <person name="Kai C."/>
            <person name="Sasaki D."/>
            <person name="Tomaru Y."/>
            <person name="Fukuda S."/>
            <person name="Kanamori-Katayama M."/>
            <person name="Suzuki M."/>
            <person name="Aoki J."/>
            <person name="Arakawa T."/>
            <person name="Iida J."/>
            <person name="Imamura K."/>
            <person name="Itoh M."/>
            <person name="Kato T."/>
            <person name="Kawaji H."/>
            <person name="Kawagashira N."/>
            <person name="Kawashima T."/>
            <person name="Kojima M."/>
            <person name="Kondo S."/>
            <person name="Konno H."/>
            <person name="Nakano K."/>
            <person name="Ninomiya N."/>
            <person name="Nishio T."/>
            <person name="Okada M."/>
            <person name="Plessy C."/>
            <person name="Shibata K."/>
            <person name="Shiraki T."/>
            <person name="Suzuki S."/>
            <person name="Tagami M."/>
            <person name="Waki K."/>
            <person name="Watahiki A."/>
            <person name="Okamura-Oho Y."/>
            <person name="Suzuki H."/>
            <person name="Kawai J."/>
            <person name="Hayashizaki Y."/>
        </authorList>
    </citation>
    <scope>NUCLEOTIDE SEQUENCE [LARGE SCALE MRNA] (ISOFORMS 1; 2 AND 3)</scope>
    <source>
        <strain>C57BL/6J</strain>
        <tissue>Hippocampus</tissue>
        <tissue>Lung</tissue>
        <tissue>Olfactory bulb</tissue>
    </source>
</reference>
<reference key="2">
    <citation type="journal article" date="2004" name="Genome Res.">
        <title>The status, quality, and expansion of the NIH full-length cDNA project: the Mammalian Gene Collection (MGC).</title>
        <authorList>
            <consortium name="The MGC Project Team"/>
        </authorList>
    </citation>
    <scope>NUCLEOTIDE SEQUENCE [LARGE SCALE MRNA] (ISOFORM 2)</scope>
    <source>
        <strain>C57BL/6J</strain>
        <tissue>Mammary gland</tissue>
    </source>
</reference>
<reference key="3">
    <citation type="journal article" date="2010" name="Cell">
        <title>A tissue-specific atlas of mouse protein phosphorylation and expression.</title>
        <authorList>
            <person name="Huttlin E.L."/>
            <person name="Jedrychowski M.P."/>
            <person name="Elias J.E."/>
            <person name="Goswami T."/>
            <person name="Rad R."/>
            <person name="Beausoleil S.A."/>
            <person name="Villen J."/>
            <person name="Haas W."/>
            <person name="Sowa M.E."/>
            <person name="Gygi S.P."/>
        </authorList>
    </citation>
    <scope>IDENTIFICATION BY MASS SPECTROMETRY [LARGE SCALE ANALYSIS]</scope>
    <source>
        <tissue>Brain</tissue>
        <tissue>Heart</tissue>
        <tissue>Kidney</tissue>
        <tissue>Liver</tissue>
        <tissue>Spleen</tissue>
        <tissue>Testis</tissue>
    </source>
</reference>
<feature type="initiator methionine" description="Removed" evidence="1">
    <location>
        <position position="1"/>
    </location>
</feature>
<feature type="chain" id="PRO_0000284410" description="Armadillo repeat-containing protein 8">
    <location>
        <begin position="2"/>
        <end position="673"/>
    </location>
</feature>
<feature type="repeat" description="ARM 1">
    <location>
        <begin position="51"/>
        <end position="92"/>
    </location>
</feature>
<feature type="repeat" description="ARM 2">
    <location>
        <begin position="95"/>
        <end position="134"/>
    </location>
</feature>
<feature type="repeat" description="ARM 3">
    <location>
        <begin position="138"/>
        <end position="176"/>
    </location>
</feature>
<feature type="repeat" description="ARM 4">
    <location>
        <begin position="178"/>
        <end position="217"/>
    </location>
</feature>
<feature type="repeat" description="ARM 5">
    <location>
        <begin position="224"/>
        <end position="265"/>
    </location>
</feature>
<feature type="repeat" description="ARM 6">
    <location>
        <begin position="269"/>
        <end position="309"/>
    </location>
</feature>
<feature type="repeat" description="ARM 7">
    <location>
        <begin position="313"/>
        <end position="352"/>
    </location>
</feature>
<feature type="repeat" description="ARM 8">
    <location>
        <begin position="374"/>
        <end position="413"/>
    </location>
</feature>
<feature type="repeat" description="ARM 9">
    <location>
        <begin position="416"/>
        <end position="455"/>
    </location>
</feature>
<feature type="repeat" description="ARM 10">
    <location>
        <begin position="458"/>
        <end position="497"/>
    </location>
</feature>
<feature type="repeat" description="ARM 11">
    <location>
        <begin position="501"/>
        <end position="540"/>
    </location>
</feature>
<feature type="repeat" description="ARM 12">
    <location>
        <begin position="543"/>
        <end position="585"/>
    </location>
</feature>
<feature type="repeat" description="ARM 13">
    <location>
        <begin position="588"/>
        <end position="627"/>
    </location>
</feature>
<feature type="repeat" description="ARM 14">
    <location>
        <begin position="634"/>
        <end position="673"/>
    </location>
</feature>
<feature type="modified residue" description="N-acetylalanine" evidence="1">
    <location>
        <position position="2"/>
    </location>
</feature>
<feature type="modified residue" description="Phosphoserine" evidence="1">
    <location>
        <position position="337"/>
    </location>
</feature>
<feature type="modified residue" description="Phosphoserine" evidence="1">
    <location>
        <position position="512"/>
    </location>
</feature>
<feature type="splice variant" id="VSP_024515" description="In isoform 3." evidence="3">
    <location>
        <begin position="1"/>
        <end position="42"/>
    </location>
</feature>
<feature type="splice variant" id="VSP_024516" description="In isoform 2 and isoform 3." evidence="2 3">
    <original>IIETETMMDRIVTGSSESSVK</original>
    <variation>VSLGEGRPPVLTASRQGVTST</variation>
    <location>
        <begin position="379"/>
        <end position="399"/>
    </location>
</feature>
<feature type="splice variant" id="VSP_024517" description="In isoform 2 and isoform 3." evidence="2 3">
    <location>
        <begin position="400"/>
        <end position="673"/>
    </location>
</feature>
<feature type="helix" evidence="4">
    <location>
        <begin position="19"/>
        <end position="28"/>
    </location>
</feature>
<feature type="helix" evidence="4">
    <location>
        <begin position="33"/>
        <end position="46"/>
    </location>
</feature>
<feature type="strand" evidence="4">
    <location>
        <begin position="47"/>
        <end position="49"/>
    </location>
</feature>
<feature type="helix" evidence="4">
    <location>
        <begin position="51"/>
        <end position="59"/>
    </location>
</feature>
<feature type="helix" evidence="4">
    <location>
        <begin position="62"/>
        <end position="71"/>
    </location>
</feature>
<feature type="strand" evidence="4">
    <location>
        <begin position="73"/>
        <end position="75"/>
    </location>
</feature>
<feature type="helix" evidence="4">
    <location>
        <begin position="77"/>
        <end position="91"/>
    </location>
</feature>
<feature type="helix" evidence="4">
    <location>
        <begin position="95"/>
        <end position="103"/>
    </location>
</feature>
<feature type="helix" evidence="4">
    <location>
        <begin position="106"/>
        <end position="113"/>
    </location>
</feature>
<feature type="helix" evidence="4">
    <location>
        <begin position="119"/>
        <end position="134"/>
    </location>
</feature>
<feature type="helix" evidence="4">
    <location>
        <begin position="141"/>
        <end position="145"/>
    </location>
</feature>
<feature type="helix" evidence="4">
    <location>
        <begin position="149"/>
        <end position="156"/>
    </location>
</feature>
<feature type="helix" evidence="4">
    <location>
        <begin position="161"/>
        <end position="173"/>
    </location>
</feature>
<feature type="helix" evidence="4">
    <location>
        <begin position="178"/>
        <end position="186"/>
    </location>
</feature>
<feature type="helix" evidence="4">
    <location>
        <begin position="189"/>
        <end position="194"/>
    </location>
</feature>
<feature type="helix" evidence="4">
    <location>
        <begin position="195"/>
        <end position="198"/>
    </location>
</feature>
<feature type="helix" evidence="4">
    <location>
        <begin position="202"/>
        <end position="215"/>
    </location>
</feature>
<feature type="helix" evidence="4">
    <location>
        <begin position="220"/>
        <end position="228"/>
    </location>
</feature>
<feature type="helix" evidence="4">
    <location>
        <begin position="236"/>
        <end position="242"/>
    </location>
</feature>
<feature type="helix" evidence="4">
    <location>
        <begin position="250"/>
        <end position="265"/>
    </location>
</feature>
<feature type="helix" evidence="4">
    <location>
        <begin position="274"/>
        <end position="277"/>
    </location>
</feature>
<feature type="helix" evidence="4">
    <location>
        <begin position="280"/>
        <end position="286"/>
    </location>
</feature>
<feature type="helix" evidence="4">
    <location>
        <begin position="294"/>
        <end position="308"/>
    </location>
</feature>
<feature type="helix" evidence="4">
    <location>
        <begin position="312"/>
        <end position="319"/>
    </location>
</feature>
<feature type="helix" evidence="4">
    <location>
        <begin position="324"/>
        <end position="329"/>
    </location>
</feature>
<feature type="helix" evidence="4">
    <location>
        <begin position="330"/>
        <end position="332"/>
    </location>
</feature>
<feature type="helix" evidence="4">
    <location>
        <begin position="344"/>
        <end position="352"/>
    </location>
</feature>
<feature type="helix" evidence="4">
    <location>
        <begin position="354"/>
        <end position="368"/>
    </location>
</feature>
<feature type="helix" evidence="4">
    <location>
        <begin position="373"/>
        <end position="378"/>
    </location>
</feature>
<accession>Q9DBR3</accession>
<accession>Q8BGV2</accession>
<accession>Q8BUP3</accession>
<proteinExistence type="evidence at protein level"/>
<gene>
    <name type="primary">Armc8</name>
</gene>
<keyword id="KW-0002">3D-structure</keyword>
<keyword id="KW-0007">Acetylation</keyword>
<keyword id="KW-0025">Alternative splicing</keyword>
<keyword id="KW-0963">Cytoplasm</keyword>
<keyword id="KW-0539">Nucleus</keyword>
<keyword id="KW-0597">Phosphoprotein</keyword>
<keyword id="KW-1185">Reference proteome</keyword>
<keyword id="KW-0677">Repeat</keyword>
<name>ARMC8_MOUSE</name>
<sequence length="673" mass="75364">MACLLETPIRMSVLSEVTASSRHYVDRLFDPDPQKVLQGVIDMKNAVIGNNKQKANLIVLGAVPRLLYLLQQETSSTELKTECAVVLGSLAMGTENNVKSLLDCHIIPALLQGLLSPDLKFIEACLRCLRTIFTSPVTPEELLYTDATVIPHLMALLSRSRYTQEYICQIFSHCCKGPDHQTILFNHGAVQNIAHLLTSPSYKVRMQALKCFSVLAFENPQVSMTLVNVLVDGELLPQIFVKMLQRDKPIEMQLTSAKCLTYMCRAGAIRTDDSCIVLKTLPCLVRMCSKERLLEERVEGAETLAYLIEPDVELQRIASITDHLIAMLADYFKYPSSVSAITDIKRLDHDLKHAHELRQAAFKLYASLGANDEDIRKKIIETETMMDRIVTGSSESSVKVRLAAVRCLHSLSRSVQQLRTSFQDHAVWKPLMKVLQNAPDEILVVASSMLCNLLLEFSPSKEPILESGAVELLCGLTQSENPALRVNGIWALMNMAFQAEQKIKADILRSLSTEQLFRLLSDSDMNVLMKTLGLLRNLLSTRPHIDKIMSTHGKQIMQAVTLILEGEHSIEVKEQTLCILANIADGTTAKELIMTNDDILQKIKYYMGHSHVKLQLAAMFCISNLTWNEEEGSQERQDKLRDMGIVDILHKLSQSADSNLCDKAKTALQQYLA</sequence>
<comment type="function">
    <text evidence="1">Component of the CTLH E3 ubiquitin-protein ligase complex that selectively accepts ubiquitin from UBE2H and mediates ubiquitination and subsequent proteasomal degradation of the transcription factor HBP1.</text>
</comment>
<comment type="subunit">
    <text evidence="1">Identified in the CTLH complex that contains GID4, RANBP9 and/or RANBP10, MKLN1, MAEA, RMND5A (or alternatively its paralog RMND5B), GID8, ARMC8, WDR26 and YPEL5. Within this complex, MAEA, RMND5A (or alternatively its paralog RMND5B), GID8, WDR26, and RANBP9 and/or RANBP10 form the catalytic core, while GID4, MKLN1, ARMC8 and YPEL5 have ancillary roles.</text>
</comment>
<comment type="subcellular location">
    <subcellularLocation>
        <location evidence="1">Nucleus</location>
    </subcellularLocation>
    <subcellularLocation>
        <location evidence="1">Cytoplasm</location>
    </subcellularLocation>
</comment>
<comment type="alternative products">
    <event type="alternative splicing"/>
    <isoform>
        <id>Q9DBR3-1</id>
        <name>1</name>
        <sequence type="displayed"/>
    </isoform>
    <isoform>
        <id>Q9DBR3-2</id>
        <name>2</name>
        <sequence type="described" ref="VSP_024516 VSP_024517"/>
    </isoform>
    <isoform>
        <id>Q9DBR3-3</id>
        <name>3</name>
        <sequence type="described" ref="VSP_024515 VSP_024516 VSP_024517"/>
    </isoform>
</comment>
<evidence type="ECO:0000250" key="1">
    <source>
        <dbReference type="UniProtKB" id="Q8IUR7"/>
    </source>
</evidence>
<evidence type="ECO:0000303" key="2">
    <source>
    </source>
</evidence>
<evidence type="ECO:0000303" key="3">
    <source>
    </source>
</evidence>
<evidence type="ECO:0007829" key="4">
    <source>
        <dbReference type="PDB" id="8A1I"/>
    </source>
</evidence>
<protein>
    <recommendedName>
        <fullName>Armadillo repeat-containing protein 8</fullName>
    </recommendedName>
</protein>
<dbReference type="EMBL" id="AK004793">
    <property type="protein sequence ID" value="BAB23569.2"/>
    <property type="molecule type" value="mRNA"/>
</dbReference>
<dbReference type="EMBL" id="AK078280">
    <property type="protein sequence ID" value="BAC37201.1"/>
    <property type="molecule type" value="mRNA"/>
</dbReference>
<dbReference type="EMBL" id="AK083094">
    <property type="protein sequence ID" value="BAC38759.1"/>
    <property type="molecule type" value="mRNA"/>
</dbReference>
<dbReference type="EMBL" id="BC038866">
    <property type="protein sequence ID" value="AAH38866.1"/>
    <property type="molecule type" value="mRNA"/>
</dbReference>
<dbReference type="CCDS" id="CCDS23434.1">
    <molecule id="Q9DBR3-1"/>
</dbReference>
<dbReference type="CCDS" id="CCDS81059.1">
    <molecule id="Q9DBR3-2"/>
</dbReference>
<dbReference type="RefSeq" id="NP_001159610.1">
    <molecule id="Q9DBR3-2"/>
    <property type="nucleotide sequence ID" value="NM_001166138.1"/>
</dbReference>
<dbReference type="RefSeq" id="NP_083044.2">
    <property type="nucleotide sequence ID" value="NM_028768.3"/>
</dbReference>
<dbReference type="PDB" id="8A1I">
    <property type="method" value="X-ray"/>
    <property type="resolution" value="2.69 A"/>
    <property type="chains" value="A/I/P=1-378"/>
</dbReference>
<dbReference type="PDBsum" id="8A1I"/>
<dbReference type="SMR" id="Q9DBR3"/>
<dbReference type="BioGRID" id="216510">
    <property type="interactions" value="12"/>
</dbReference>
<dbReference type="FunCoup" id="Q9DBR3">
    <property type="interactions" value="3861"/>
</dbReference>
<dbReference type="IntAct" id="Q9DBR3">
    <property type="interactions" value="2"/>
</dbReference>
<dbReference type="STRING" id="10090.ENSMUSP00000035043"/>
<dbReference type="iPTMnet" id="Q9DBR3"/>
<dbReference type="PhosphoSitePlus" id="Q9DBR3"/>
<dbReference type="SwissPalm" id="Q9DBR3"/>
<dbReference type="PaxDb" id="10090-ENSMUSP00000035043"/>
<dbReference type="PeptideAtlas" id="Q9DBR3"/>
<dbReference type="ProteomicsDB" id="283226">
    <molecule id="Q9DBR3-1"/>
</dbReference>
<dbReference type="ProteomicsDB" id="283227">
    <molecule id="Q9DBR3-2"/>
</dbReference>
<dbReference type="ProteomicsDB" id="283228">
    <molecule id="Q9DBR3-3"/>
</dbReference>
<dbReference type="Pumba" id="Q9DBR3"/>
<dbReference type="Antibodypedia" id="33425">
    <property type="antibodies" value="149 antibodies from 21 providers"/>
</dbReference>
<dbReference type="Ensembl" id="ENSMUST00000185524.7">
    <molecule id="Q9DBR3-2"/>
    <property type="protein sequence ID" value="ENSMUSP00000139973.2"/>
    <property type="gene ID" value="ENSMUSG00000032468.12"/>
</dbReference>
<dbReference type="Ensembl" id="ENSMUST00000186049.2">
    <molecule id="Q9DBR3-3"/>
    <property type="protein sequence ID" value="ENSMUSP00000140426.2"/>
    <property type="gene ID" value="ENSMUSG00000032468.12"/>
</dbReference>
<dbReference type="GeneID" id="74125"/>
<dbReference type="KEGG" id="mmu:74125"/>
<dbReference type="UCSC" id="uc009reg.1">
    <molecule id="Q9DBR3-2"/>
    <property type="organism name" value="mouse"/>
</dbReference>
<dbReference type="UCSC" id="uc009reh.1">
    <molecule id="Q9DBR3-3"/>
    <property type="organism name" value="mouse"/>
</dbReference>
<dbReference type="AGR" id="MGI:1921375"/>
<dbReference type="CTD" id="25852"/>
<dbReference type="MGI" id="MGI:1921375">
    <property type="gene designation" value="Armc8"/>
</dbReference>
<dbReference type="VEuPathDB" id="HostDB:ENSMUSG00000032468"/>
<dbReference type="eggNOG" id="KOG1293">
    <property type="taxonomic scope" value="Eukaryota"/>
</dbReference>
<dbReference type="GeneTree" id="ENSGT00390000003033"/>
<dbReference type="HOGENOM" id="CLU_776045_0_0_1"/>
<dbReference type="InParanoid" id="Q9DBR3"/>
<dbReference type="OrthoDB" id="5559898at2759"/>
<dbReference type="PhylomeDB" id="Q9DBR3"/>
<dbReference type="Reactome" id="R-MMU-6798695">
    <property type="pathway name" value="Neutrophil degranulation"/>
</dbReference>
<dbReference type="Reactome" id="R-MMU-9861718">
    <property type="pathway name" value="Regulation of pyruvate metabolism"/>
</dbReference>
<dbReference type="BioGRID-ORCS" id="74125">
    <property type="hits" value="4 hits in 79 CRISPR screens"/>
</dbReference>
<dbReference type="ChiTaRS" id="Armc8">
    <property type="organism name" value="mouse"/>
</dbReference>
<dbReference type="PRO" id="PR:Q9DBR3"/>
<dbReference type="Proteomes" id="UP000000589">
    <property type="component" value="Chromosome 9"/>
</dbReference>
<dbReference type="RNAct" id="Q9DBR3">
    <property type="molecule type" value="protein"/>
</dbReference>
<dbReference type="Bgee" id="ENSMUSG00000032468">
    <property type="expression patterns" value="Expressed in ciliary body and 220 other cell types or tissues"/>
</dbReference>
<dbReference type="ExpressionAtlas" id="Q9DBR3">
    <property type="expression patterns" value="baseline and differential"/>
</dbReference>
<dbReference type="GO" id="GO:0005737">
    <property type="term" value="C:cytoplasm"/>
    <property type="evidence" value="ECO:0000250"/>
    <property type="project" value="UniProtKB"/>
</dbReference>
<dbReference type="GO" id="GO:0005634">
    <property type="term" value="C:nucleus"/>
    <property type="evidence" value="ECO:0000250"/>
    <property type="project" value="UniProtKB"/>
</dbReference>
<dbReference type="GO" id="GO:0000151">
    <property type="term" value="C:ubiquitin ligase complex"/>
    <property type="evidence" value="ECO:0000250"/>
    <property type="project" value="UniProtKB"/>
</dbReference>
<dbReference type="FunFam" id="1.25.10.10:FF:000061">
    <property type="entry name" value="armadillo repeat-containing protein 8 isoform X1"/>
    <property type="match status" value="1"/>
</dbReference>
<dbReference type="FunFam" id="1.25.10.10:FF:000070">
    <property type="entry name" value="armadillo repeat-containing protein 8 isoform X1"/>
    <property type="match status" value="1"/>
</dbReference>
<dbReference type="Gene3D" id="1.25.10.10">
    <property type="entry name" value="Leucine-rich Repeat Variant"/>
    <property type="match status" value="2"/>
</dbReference>
<dbReference type="InterPro" id="IPR011989">
    <property type="entry name" value="ARM-like"/>
</dbReference>
<dbReference type="InterPro" id="IPR016024">
    <property type="entry name" value="ARM-type_fold"/>
</dbReference>
<dbReference type="InterPro" id="IPR000225">
    <property type="entry name" value="Armadillo"/>
</dbReference>
<dbReference type="InterPro" id="IPR038739">
    <property type="entry name" value="ARMC8/Vid28"/>
</dbReference>
<dbReference type="PANTHER" id="PTHR15651">
    <property type="entry name" value="ARMADILLO REPEAT-CONTAINING PROTEIN 8"/>
    <property type="match status" value="1"/>
</dbReference>
<dbReference type="PANTHER" id="PTHR15651:SF7">
    <property type="entry name" value="ARMADILLO REPEAT-CONTAINING PROTEIN 8"/>
    <property type="match status" value="1"/>
</dbReference>
<dbReference type="Pfam" id="PF00514">
    <property type="entry name" value="Arm"/>
    <property type="match status" value="1"/>
</dbReference>
<dbReference type="SMART" id="SM00185">
    <property type="entry name" value="ARM"/>
    <property type="match status" value="9"/>
</dbReference>
<dbReference type="SUPFAM" id="SSF48371">
    <property type="entry name" value="ARM repeat"/>
    <property type="match status" value="1"/>
</dbReference>
<dbReference type="PROSITE" id="PS50176">
    <property type="entry name" value="ARM_REPEAT"/>
    <property type="match status" value="1"/>
</dbReference>
<organism>
    <name type="scientific">Mus musculus</name>
    <name type="common">Mouse</name>
    <dbReference type="NCBI Taxonomy" id="10090"/>
    <lineage>
        <taxon>Eukaryota</taxon>
        <taxon>Metazoa</taxon>
        <taxon>Chordata</taxon>
        <taxon>Craniata</taxon>
        <taxon>Vertebrata</taxon>
        <taxon>Euteleostomi</taxon>
        <taxon>Mammalia</taxon>
        <taxon>Eutheria</taxon>
        <taxon>Euarchontoglires</taxon>
        <taxon>Glires</taxon>
        <taxon>Rodentia</taxon>
        <taxon>Myomorpha</taxon>
        <taxon>Muroidea</taxon>
        <taxon>Muridae</taxon>
        <taxon>Murinae</taxon>
        <taxon>Mus</taxon>
        <taxon>Mus</taxon>
    </lineage>
</organism>